<keyword id="KW-0963">Cytoplasm</keyword>
<keyword id="KW-0342">GTP-binding</keyword>
<keyword id="KW-0396">Initiation factor</keyword>
<keyword id="KW-0547">Nucleotide-binding</keyword>
<keyword id="KW-0648">Protein biosynthesis</keyword>
<dbReference type="EMBL" id="CP000514">
    <property type="protein sequence ID" value="ABM20419.1"/>
    <property type="molecule type" value="Genomic_DNA"/>
</dbReference>
<dbReference type="RefSeq" id="WP_011786760.1">
    <property type="nucleotide sequence ID" value="NC_008740.1"/>
</dbReference>
<dbReference type="SMR" id="A1U600"/>
<dbReference type="STRING" id="351348.Maqu_3348"/>
<dbReference type="KEGG" id="maq:Maqu_3348"/>
<dbReference type="eggNOG" id="COG0532">
    <property type="taxonomic scope" value="Bacteria"/>
</dbReference>
<dbReference type="HOGENOM" id="CLU_006301_6_1_6"/>
<dbReference type="OrthoDB" id="9811804at2"/>
<dbReference type="Proteomes" id="UP000000998">
    <property type="component" value="Chromosome"/>
</dbReference>
<dbReference type="GO" id="GO:0005829">
    <property type="term" value="C:cytosol"/>
    <property type="evidence" value="ECO:0007669"/>
    <property type="project" value="TreeGrafter"/>
</dbReference>
<dbReference type="GO" id="GO:0005525">
    <property type="term" value="F:GTP binding"/>
    <property type="evidence" value="ECO:0007669"/>
    <property type="project" value="UniProtKB-KW"/>
</dbReference>
<dbReference type="GO" id="GO:0003924">
    <property type="term" value="F:GTPase activity"/>
    <property type="evidence" value="ECO:0007669"/>
    <property type="project" value="UniProtKB-UniRule"/>
</dbReference>
<dbReference type="GO" id="GO:0003743">
    <property type="term" value="F:translation initiation factor activity"/>
    <property type="evidence" value="ECO:0007669"/>
    <property type="project" value="UniProtKB-UniRule"/>
</dbReference>
<dbReference type="CDD" id="cd01887">
    <property type="entry name" value="IF2_eIF5B"/>
    <property type="match status" value="1"/>
</dbReference>
<dbReference type="CDD" id="cd03702">
    <property type="entry name" value="IF2_mtIF2_II"/>
    <property type="match status" value="1"/>
</dbReference>
<dbReference type="CDD" id="cd03692">
    <property type="entry name" value="mtIF2_IVc"/>
    <property type="match status" value="1"/>
</dbReference>
<dbReference type="FunFam" id="2.40.30.10:FF:000007">
    <property type="entry name" value="Translation initiation factor IF-2"/>
    <property type="match status" value="1"/>
</dbReference>
<dbReference type="FunFam" id="2.40.30.10:FF:000008">
    <property type="entry name" value="Translation initiation factor IF-2"/>
    <property type="match status" value="1"/>
</dbReference>
<dbReference type="FunFam" id="3.40.50.10050:FF:000001">
    <property type="entry name" value="Translation initiation factor IF-2"/>
    <property type="match status" value="1"/>
</dbReference>
<dbReference type="FunFam" id="3.40.50.300:FF:000019">
    <property type="entry name" value="Translation initiation factor IF-2"/>
    <property type="match status" value="1"/>
</dbReference>
<dbReference type="Gene3D" id="3.40.50.300">
    <property type="entry name" value="P-loop containing nucleotide triphosphate hydrolases"/>
    <property type="match status" value="1"/>
</dbReference>
<dbReference type="Gene3D" id="3.30.56.50">
    <property type="entry name" value="Putative DNA-binding domain, N-terminal subdomain of bacterial translation initiation factor IF2"/>
    <property type="match status" value="1"/>
</dbReference>
<dbReference type="Gene3D" id="2.40.30.10">
    <property type="entry name" value="Translation factors"/>
    <property type="match status" value="2"/>
</dbReference>
<dbReference type="Gene3D" id="3.40.50.10050">
    <property type="entry name" value="Translation initiation factor IF- 2, domain 3"/>
    <property type="match status" value="1"/>
</dbReference>
<dbReference type="HAMAP" id="MF_00100_B">
    <property type="entry name" value="IF_2_B"/>
    <property type="match status" value="1"/>
</dbReference>
<dbReference type="InterPro" id="IPR009061">
    <property type="entry name" value="DNA-bd_dom_put_sf"/>
</dbReference>
<dbReference type="InterPro" id="IPR053905">
    <property type="entry name" value="EF-G-like_DII"/>
</dbReference>
<dbReference type="InterPro" id="IPR013575">
    <property type="entry name" value="IF2_assoc_dom_bac"/>
</dbReference>
<dbReference type="InterPro" id="IPR044145">
    <property type="entry name" value="IF2_II"/>
</dbReference>
<dbReference type="InterPro" id="IPR006847">
    <property type="entry name" value="IF2_N"/>
</dbReference>
<dbReference type="InterPro" id="IPR027417">
    <property type="entry name" value="P-loop_NTPase"/>
</dbReference>
<dbReference type="InterPro" id="IPR005225">
    <property type="entry name" value="Small_GTP-bd"/>
</dbReference>
<dbReference type="InterPro" id="IPR000795">
    <property type="entry name" value="T_Tr_GTP-bd_dom"/>
</dbReference>
<dbReference type="InterPro" id="IPR000178">
    <property type="entry name" value="TF_IF2_bacterial-like"/>
</dbReference>
<dbReference type="InterPro" id="IPR015760">
    <property type="entry name" value="TIF_IF2"/>
</dbReference>
<dbReference type="InterPro" id="IPR023115">
    <property type="entry name" value="TIF_IF2_dom3"/>
</dbReference>
<dbReference type="InterPro" id="IPR036925">
    <property type="entry name" value="TIF_IF2_dom3_sf"/>
</dbReference>
<dbReference type="InterPro" id="IPR009000">
    <property type="entry name" value="Transl_B-barrel_sf"/>
</dbReference>
<dbReference type="NCBIfam" id="TIGR00487">
    <property type="entry name" value="IF-2"/>
    <property type="match status" value="1"/>
</dbReference>
<dbReference type="NCBIfam" id="TIGR00231">
    <property type="entry name" value="small_GTP"/>
    <property type="match status" value="1"/>
</dbReference>
<dbReference type="PANTHER" id="PTHR43381:SF5">
    <property type="entry name" value="TR-TYPE G DOMAIN-CONTAINING PROTEIN"/>
    <property type="match status" value="1"/>
</dbReference>
<dbReference type="PANTHER" id="PTHR43381">
    <property type="entry name" value="TRANSLATION INITIATION FACTOR IF-2-RELATED"/>
    <property type="match status" value="1"/>
</dbReference>
<dbReference type="Pfam" id="PF22042">
    <property type="entry name" value="EF-G_D2"/>
    <property type="match status" value="1"/>
</dbReference>
<dbReference type="Pfam" id="PF00009">
    <property type="entry name" value="GTP_EFTU"/>
    <property type="match status" value="1"/>
</dbReference>
<dbReference type="Pfam" id="PF11987">
    <property type="entry name" value="IF-2"/>
    <property type="match status" value="1"/>
</dbReference>
<dbReference type="Pfam" id="PF08364">
    <property type="entry name" value="IF2_assoc"/>
    <property type="match status" value="1"/>
</dbReference>
<dbReference type="Pfam" id="PF04760">
    <property type="entry name" value="IF2_N"/>
    <property type="match status" value="2"/>
</dbReference>
<dbReference type="SUPFAM" id="SSF52156">
    <property type="entry name" value="Initiation factor IF2/eIF5b, domain 3"/>
    <property type="match status" value="1"/>
</dbReference>
<dbReference type="SUPFAM" id="SSF52540">
    <property type="entry name" value="P-loop containing nucleoside triphosphate hydrolases"/>
    <property type="match status" value="1"/>
</dbReference>
<dbReference type="SUPFAM" id="SSF46955">
    <property type="entry name" value="Putative DNA-binding domain"/>
    <property type="match status" value="1"/>
</dbReference>
<dbReference type="SUPFAM" id="SSF50447">
    <property type="entry name" value="Translation proteins"/>
    <property type="match status" value="2"/>
</dbReference>
<dbReference type="PROSITE" id="PS51722">
    <property type="entry name" value="G_TR_2"/>
    <property type="match status" value="1"/>
</dbReference>
<dbReference type="PROSITE" id="PS01176">
    <property type="entry name" value="IF2"/>
    <property type="match status" value="1"/>
</dbReference>
<reference key="1">
    <citation type="journal article" date="2011" name="Appl. Environ. Microbiol.">
        <title>Genomic potential of Marinobacter aquaeolei, a biogeochemical 'opportunitroph'.</title>
        <authorList>
            <person name="Singer E."/>
            <person name="Webb E.A."/>
            <person name="Nelson W.C."/>
            <person name="Heidelberg J.F."/>
            <person name="Ivanova N."/>
            <person name="Pati A."/>
            <person name="Edwards K.J."/>
        </authorList>
    </citation>
    <scope>NUCLEOTIDE SEQUENCE [LARGE SCALE GENOMIC DNA]</scope>
    <source>
        <strain>ATCC 700491 / DSM 11845 / VT8</strain>
    </source>
</reference>
<protein>
    <recommendedName>
        <fullName evidence="2">Translation initiation factor IF-2</fullName>
    </recommendedName>
</protein>
<accession>A1U600</accession>
<name>IF2_MARN8</name>
<organism>
    <name type="scientific">Marinobacter nauticus (strain ATCC 700491 / DSM 11845 / VT8)</name>
    <name type="common">Marinobacter aquaeolei</name>
    <dbReference type="NCBI Taxonomy" id="351348"/>
    <lineage>
        <taxon>Bacteria</taxon>
        <taxon>Pseudomonadati</taxon>
        <taxon>Pseudomonadota</taxon>
        <taxon>Gammaproteobacteria</taxon>
        <taxon>Pseudomonadales</taxon>
        <taxon>Marinobacteraceae</taxon>
        <taxon>Marinobacter</taxon>
    </lineage>
</organism>
<proteinExistence type="inferred from homology"/>
<sequence length="848" mass="92213">MAEVTVKQLAADVGAPVDRLLKQIVEAGLKARSENDAVTSDEKQQLLAYLRKNHGEAEAEPRKITLKRKTTTTLKAGKAKTVNVEVRKRRTYIKRAELQPEPEAEAPAPEEPVQAPAAEQAPVEEAPKVAAEAAPAEAPETEAPAAAETEAKAAPEPAAESAEPAIAPEDIPMPPPEDEGRDRKPKKKKEKVRERGDDIEEGKPKKKQAGHRGPRSRPVEEPVVLSEDEEETTLRKPLRAKKKPKEKRHAFERPTKPMVREVQIPETITVGDLAQRMAVKSADVIKTLMGMGVMATINQALDQETAILVTEELGHKPKAVSEDAFEEEVLSEITGPDEGKEKIKRAPVVSVMGHVDHGKTSLLDHIRRAKVAAGESGGITQHIGAYHVETEHGMVSFLDTPGHAAFTAMRARGAQCTDIVILVVAADDGVMPQTKEAVEHARSAGVPIVVAINKMDKEEADPDRIKNELSALEVIPEDWGGDVQFVPVSAHTGMGIDDLLEAVLLQAEILELEASPDAAAKGVVVESSLERGRGSVATVLVQNGTLRQGDMVVAGSFFGKVRAMTDEAGRQVKEAGPSIPVEILGLNGTPDAGDEFFAVADEKKAKELAEFRQTREREQRLQRQQAAKLENMFENMGKDEVKTLNVVLKTDVRGSLEAITKALQDLGNDEVQVKIVSSGVGGIAETDVSLAMATNAVIFGFNVRADTASKRLVEQEGLDLRYYSIIYNLIDDVKAALTGMLKPEFREDIVGIADVRDVFRSPKFGQVAGCMVTEGTVYRNKPIRVLRDNVVIFEGELESLRRFKDDVAEVRNGMECGIGVKGYDVKVGDQIEVFDRVRVERQLESTGA</sequence>
<gene>
    <name evidence="2" type="primary">infB</name>
    <name type="ordered locus">Maqu_3348</name>
</gene>
<evidence type="ECO:0000250" key="1"/>
<evidence type="ECO:0000255" key="2">
    <source>
        <dbReference type="HAMAP-Rule" id="MF_00100"/>
    </source>
</evidence>
<evidence type="ECO:0000256" key="3">
    <source>
        <dbReference type="SAM" id="MobiDB-lite"/>
    </source>
</evidence>
<comment type="function">
    <text evidence="2">One of the essential components for the initiation of protein synthesis. Protects formylmethionyl-tRNA from spontaneous hydrolysis and promotes its binding to the 30S ribosomal subunits. Also involved in the hydrolysis of GTP during the formation of the 70S ribosomal complex.</text>
</comment>
<comment type="subcellular location">
    <subcellularLocation>
        <location evidence="2">Cytoplasm</location>
    </subcellularLocation>
</comment>
<comment type="similarity">
    <text evidence="2">Belongs to the TRAFAC class translation factor GTPase superfamily. Classic translation factor GTPase family. IF-2 subfamily.</text>
</comment>
<feature type="chain" id="PRO_1000008267" description="Translation initiation factor IF-2">
    <location>
        <begin position="1"/>
        <end position="848"/>
    </location>
</feature>
<feature type="domain" description="tr-type G">
    <location>
        <begin position="344"/>
        <end position="511"/>
    </location>
</feature>
<feature type="region of interest" description="Disordered" evidence="3">
    <location>
        <begin position="90"/>
        <end position="253"/>
    </location>
</feature>
<feature type="region of interest" description="G1" evidence="1">
    <location>
        <begin position="353"/>
        <end position="360"/>
    </location>
</feature>
<feature type="region of interest" description="G2" evidence="1">
    <location>
        <begin position="378"/>
        <end position="382"/>
    </location>
</feature>
<feature type="region of interest" description="G3" evidence="1">
    <location>
        <begin position="399"/>
        <end position="402"/>
    </location>
</feature>
<feature type="region of interest" description="G4" evidence="1">
    <location>
        <begin position="453"/>
        <end position="456"/>
    </location>
</feature>
<feature type="region of interest" description="G5" evidence="1">
    <location>
        <begin position="489"/>
        <end position="491"/>
    </location>
</feature>
<feature type="compositionally biased region" description="Low complexity" evidence="3">
    <location>
        <begin position="105"/>
        <end position="170"/>
    </location>
</feature>
<feature type="compositionally biased region" description="Basic residues" evidence="3">
    <location>
        <begin position="204"/>
        <end position="215"/>
    </location>
</feature>
<feature type="compositionally biased region" description="Basic residues" evidence="3">
    <location>
        <begin position="236"/>
        <end position="248"/>
    </location>
</feature>
<feature type="binding site" evidence="2">
    <location>
        <begin position="353"/>
        <end position="360"/>
    </location>
    <ligand>
        <name>GTP</name>
        <dbReference type="ChEBI" id="CHEBI:37565"/>
    </ligand>
</feature>
<feature type="binding site" evidence="2">
    <location>
        <begin position="399"/>
        <end position="403"/>
    </location>
    <ligand>
        <name>GTP</name>
        <dbReference type="ChEBI" id="CHEBI:37565"/>
    </ligand>
</feature>
<feature type="binding site" evidence="2">
    <location>
        <begin position="453"/>
        <end position="456"/>
    </location>
    <ligand>
        <name>GTP</name>
        <dbReference type="ChEBI" id="CHEBI:37565"/>
    </ligand>
</feature>